<protein>
    <recommendedName>
        <fullName evidence="1">Holliday junction branch migration complex subunit RuvB</fullName>
        <ecNumber evidence="1">3.6.4.-</ecNumber>
    </recommendedName>
</protein>
<evidence type="ECO:0000255" key="1">
    <source>
        <dbReference type="HAMAP-Rule" id="MF_00016"/>
    </source>
</evidence>
<gene>
    <name evidence="1" type="primary">ruvB</name>
    <name type="ordered locus">TT_C0038</name>
</gene>
<comment type="function">
    <text evidence="1">The RuvA-RuvB-RuvC complex processes Holliday junction (HJ) DNA during genetic recombination and DNA repair, while the RuvA-RuvB complex plays an important role in the rescue of blocked DNA replication forks via replication fork reversal (RFR). RuvA specifically binds to HJ cruciform DNA, conferring on it an open structure. The RuvB hexamer acts as an ATP-dependent pump, pulling dsDNA into and through the RuvAB complex. RuvB forms 2 homohexamers on either side of HJ DNA bound by 1 or 2 RuvA tetramers; 4 subunits per hexamer contact DNA at a time. Coordinated motions by a converter formed by DNA-disengaged RuvB subunits stimulates ATP hydrolysis and nucleotide exchange. Immobilization of the converter enables RuvB to convert the ATP-contained energy into a lever motion, pulling 2 nucleotides of DNA out of the RuvA tetramer per ATP hydrolyzed, thus driving DNA branch migration. The RuvB motors rotate together with the DNA substrate, which together with the progressing nucleotide cycle form the mechanistic basis for DNA recombination by continuous HJ branch migration. Branch migration allows RuvC to scan DNA until it finds its consensus sequence, where it cleaves and resolves cruciform DNA.</text>
</comment>
<comment type="catalytic activity">
    <reaction evidence="1">
        <text>ATP + H2O = ADP + phosphate + H(+)</text>
        <dbReference type="Rhea" id="RHEA:13065"/>
        <dbReference type="ChEBI" id="CHEBI:15377"/>
        <dbReference type="ChEBI" id="CHEBI:15378"/>
        <dbReference type="ChEBI" id="CHEBI:30616"/>
        <dbReference type="ChEBI" id="CHEBI:43474"/>
        <dbReference type="ChEBI" id="CHEBI:456216"/>
    </reaction>
</comment>
<comment type="subunit">
    <text evidence="1">Homohexamer. Forms an RuvA(8)-RuvB(12)-Holliday junction (HJ) complex. HJ DNA is sandwiched between 2 RuvA tetramers; dsDNA enters through RuvA and exits via RuvB. An RuvB hexamer assembles on each DNA strand where it exits the tetramer. Each RuvB hexamer is contacted by two RuvA subunits (via domain III) on 2 adjacent RuvB subunits; this complex drives branch migration. In the full resolvosome a probable DNA-RuvA(4)-RuvB(12)-RuvC(2) complex forms which resolves the HJ.</text>
</comment>
<comment type="subcellular location">
    <subcellularLocation>
        <location evidence="1">Cytoplasm</location>
    </subcellularLocation>
</comment>
<comment type="domain">
    <text evidence="1">Has 3 domains, the large (RuvB-L) and small ATPase (RuvB-S) domains and the C-terminal head (RuvB-H) domain. The head domain binds DNA, while the ATPase domains jointly bind ATP, ADP or are empty depending on the state of the subunit in the translocation cycle. During a single DNA translocation step the structure of each domain remains the same, but their relative positions change.</text>
</comment>
<comment type="similarity">
    <text evidence="1">Belongs to the RuvB family.</text>
</comment>
<keyword id="KW-0067">ATP-binding</keyword>
<keyword id="KW-0963">Cytoplasm</keyword>
<keyword id="KW-0227">DNA damage</keyword>
<keyword id="KW-0233">DNA recombination</keyword>
<keyword id="KW-0234">DNA repair</keyword>
<keyword id="KW-0238">DNA-binding</keyword>
<keyword id="KW-0378">Hydrolase</keyword>
<keyword id="KW-0547">Nucleotide-binding</keyword>
<feature type="chain" id="PRO_0000165618" description="Holliday junction branch migration complex subunit RuvB">
    <location>
        <begin position="1"/>
        <end position="336"/>
    </location>
</feature>
<feature type="region of interest" description="Large ATPase domain (RuvB-L)" evidence="1">
    <location>
        <begin position="1"/>
        <end position="180"/>
    </location>
</feature>
<feature type="region of interest" description="Small ATPAse domain (RuvB-S)" evidence="1">
    <location>
        <begin position="181"/>
        <end position="251"/>
    </location>
</feature>
<feature type="region of interest" description="Head domain (RuvB-H)" evidence="1">
    <location>
        <begin position="254"/>
        <end position="336"/>
    </location>
</feature>
<feature type="binding site" evidence="1">
    <location>
        <position position="18"/>
    </location>
    <ligand>
        <name>ATP</name>
        <dbReference type="ChEBI" id="CHEBI:30616"/>
    </ligand>
</feature>
<feature type="binding site" evidence="1">
    <location>
        <position position="19"/>
    </location>
    <ligand>
        <name>ATP</name>
        <dbReference type="ChEBI" id="CHEBI:30616"/>
    </ligand>
</feature>
<feature type="binding site" evidence="1">
    <location>
        <position position="60"/>
    </location>
    <ligand>
        <name>ATP</name>
        <dbReference type="ChEBI" id="CHEBI:30616"/>
    </ligand>
</feature>
<feature type="binding site" evidence="1">
    <location>
        <position position="63"/>
    </location>
    <ligand>
        <name>ATP</name>
        <dbReference type="ChEBI" id="CHEBI:30616"/>
    </ligand>
</feature>
<feature type="binding site" evidence="1">
    <location>
        <position position="64"/>
    </location>
    <ligand>
        <name>ATP</name>
        <dbReference type="ChEBI" id="CHEBI:30616"/>
    </ligand>
</feature>
<feature type="binding site" evidence="1">
    <location>
        <position position="64"/>
    </location>
    <ligand>
        <name>Mg(2+)</name>
        <dbReference type="ChEBI" id="CHEBI:18420"/>
    </ligand>
</feature>
<feature type="binding site" evidence="1">
    <location>
        <position position="65"/>
    </location>
    <ligand>
        <name>ATP</name>
        <dbReference type="ChEBI" id="CHEBI:30616"/>
    </ligand>
</feature>
<feature type="binding site" evidence="1">
    <location>
        <begin position="127"/>
        <end position="129"/>
    </location>
    <ligand>
        <name>ATP</name>
        <dbReference type="ChEBI" id="CHEBI:30616"/>
    </ligand>
</feature>
<feature type="binding site" evidence="1">
    <location>
        <position position="170"/>
    </location>
    <ligand>
        <name>ATP</name>
        <dbReference type="ChEBI" id="CHEBI:30616"/>
    </ligand>
</feature>
<feature type="binding site" evidence="1">
    <location>
        <position position="180"/>
    </location>
    <ligand>
        <name>ATP</name>
        <dbReference type="ChEBI" id="CHEBI:30616"/>
    </ligand>
</feature>
<feature type="binding site" evidence="1">
    <location>
        <position position="217"/>
    </location>
    <ligand>
        <name>ATP</name>
        <dbReference type="ChEBI" id="CHEBI:30616"/>
    </ligand>
</feature>
<feature type="binding site" evidence="1">
    <location>
        <position position="309"/>
    </location>
    <ligand>
        <name>DNA</name>
        <dbReference type="ChEBI" id="CHEBI:16991"/>
    </ligand>
</feature>
<feature type="binding site" evidence="1">
    <location>
        <position position="314"/>
    </location>
    <ligand>
        <name>DNA</name>
        <dbReference type="ChEBI" id="CHEBI:16991"/>
    </ligand>
</feature>
<sequence>MRRTGIRLSWRSVDDLALRPKTLDEYIGQERLKQKLRVYLEAAKARKEPLEHLLLFGPPGLGKTTLAHVIAHELGVNLRVTSGPAIEKPGDLAAILANSLEEGDILFIDEIHRLSRQAEEHLYPAMEDFVMDIVIGQGPAARTIRLELPRFTLIGATTRPGLITAPLLSRFGIVEHLEYYTPEELAQGVMRDARLLGVRITEEAALEIGRRSRGTMRVAKRLFRRVRDFAQVAGEEVITRERALEALAALGLDELGLEKRDREILEVLILRFGGGPVGLATLATALSEDPGTLEEVHEPYLIRQGLLKRTPRGRVATELAYRHLGYPPPVGPLLEP</sequence>
<organism>
    <name type="scientific">Thermus thermophilus (strain ATCC BAA-163 / DSM 7039 / HB27)</name>
    <dbReference type="NCBI Taxonomy" id="262724"/>
    <lineage>
        <taxon>Bacteria</taxon>
        <taxon>Thermotogati</taxon>
        <taxon>Deinococcota</taxon>
        <taxon>Deinococci</taxon>
        <taxon>Thermales</taxon>
        <taxon>Thermaceae</taxon>
        <taxon>Thermus</taxon>
    </lineage>
</organism>
<name>RUVB_THET2</name>
<reference key="1">
    <citation type="journal article" date="2004" name="Nat. Biotechnol.">
        <title>The genome sequence of the extreme thermophile Thermus thermophilus.</title>
        <authorList>
            <person name="Henne A."/>
            <person name="Brueggemann H."/>
            <person name="Raasch C."/>
            <person name="Wiezer A."/>
            <person name="Hartsch T."/>
            <person name="Liesegang H."/>
            <person name="Johann A."/>
            <person name="Lienard T."/>
            <person name="Gohl O."/>
            <person name="Martinez-Arias R."/>
            <person name="Jacobi C."/>
            <person name="Starkuviene V."/>
            <person name="Schlenczeck S."/>
            <person name="Dencker S."/>
            <person name="Huber R."/>
            <person name="Klenk H.-P."/>
            <person name="Kramer W."/>
            <person name="Merkl R."/>
            <person name="Gottschalk G."/>
            <person name="Fritz H.-J."/>
        </authorList>
    </citation>
    <scope>NUCLEOTIDE SEQUENCE [LARGE SCALE GENOMIC DNA]</scope>
    <source>
        <strain>ATCC BAA-163 / DSM 7039 / HB27</strain>
    </source>
</reference>
<accession>P61537</accession>
<proteinExistence type="inferred from homology"/>
<dbReference type="EC" id="3.6.4.-" evidence="1"/>
<dbReference type="EMBL" id="AE017221">
    <property type="protein sequence ID" value="AAS80386.1"/>
    <property type="molecule type" value="Genomic_DNA"/>
</dbReference>
<dbReference type="SMR" id="P61537"/>
<dbReference type="KEGG" id="tth:TT_C0038"/>
<dbReference type="eggNOG" id="COG2255">
    <property type="taxonomic scope" value="Bacteria"/>
</dbReference>
<dbReference type="HOGENOM" id="CLU_055599_1_0_0"/>
<dbReference type="Proteomes" id="UP000000592">
    <property type="component" value="Chromosome"/>
</dbReference>
<dbReference type="GO" id="GO:0005737">
    <property type="term" value="C:cytoplasm"/>
    <property type="evidence" value="ECO:0007669"/>
    <property type="project" value="UniProtKB-SubCell"/>
</dbReference>
<dbReference type="GO" id="GO:0048476">
    <property type="term" value="C:Holliday junction resolvase complex"/>
    <property type="evidence" value="ECO:0007669"/>
    <property type="project" value="UniProtKB-UniRule"/>
</dbReference>
<dbReference type="GO" id="GO:0005524">
    <property type="term" value="F:ATP binding"/>
    <property type="evidence" value="ECO:0007669"/>
    <property type="project" value="UniProtKB-UniRule"/>
</dbReference>
<dbReference type="GO" id="GO:0016887">
    <property type="term" value="F:ATP hydrolysis activity"/>
    <property type="evidence" value="ECO:0007669"/>
    <property type="project" value="InterPro"/>
</dbReference>
<dbReference type="GO" id="GO:0000400">
    <property type="term" value="F:four-way junction DNA binding"/>
    <property type="evidence" value="ECO:0007669"/>
    <property type="project" value="UniProtKB-UniRule"/>
</dbReference>
<dbReference type="GO" id="GO:0009378">
    <property type="term" value="F:four-way junction helicase activity"/>
    <property type="evidence" value="ECO:0007669"/>
    <property type="project" value="InterPro"/>
</dbReference>
<dbReference type="GO" id="GO:0006310">
    <property type="term" value="P:DNA recombination"/>
    <property type="evidence" value="ECO:0007669"/>
    <property type="project" value="UniProtKB-UniRule"/>
</dbReference>
<dbReference type="GO" id="GO:0006281">
    <property type="term" value="P:DNA repair"/>
    <property type="evidence" value="ECO:0007669"/>
    <property type="project" value="UniProtKB-UniRule"/>
</dbReference>
<dbReference type="CDD" id="cd00009">
    <property type="entry name" value="AAA"/>
    <property type="match status" value="1"/>
</dbReference>
<dbReference type="Gene3D" id="1.10.8.60">
    <property type="match status" value="1"/>
</dbReference>
<dbReference type="Gene3D" id="3.40.50.300">
    <property type="entry name" value="P-loop containing nucleotide triphosphate hydrolases"/>
    <property type="match status" value="1"/>
</dbReference>
<dbReference type="Gene3D" id="1.10.10.10">
    <property type="entry name" value="Winged helix-like DNA-binding domain superfamily/Winged helix DNA-binding domain"/>
    <property type="match status" value="1"/>
</dbReference>
<dbReference type="HAMAP" id="MF_00016">
    <property type="entry name" value="DNA_HJ_migration_RuvB"/>
    <property type="match status" value="1"/>
</dbReference>
<dbReference type="InterPro" id="IPR003593">
    <property type="entry name" value="AAA+_ATPase"/>
</dbReference>
<dbReference type="InterPro" id="IPR041445">
    <property type="entry name" value="AAA_lid_4"/>
</dbReference>
<dbReference type="InterPro" id="IPR004605">
    <property type="entry name" value="DNA_helicase_Holl-junc_RuvB"/>
</dbReference>
<dbReference type="InterPro" id="IPR027417">
    <property type="entry name" value="P-loop_NTPase"/>
</dbReference>
<dbReference type="InterPro" id="IPR008824">
    <property type="entry name" value="RuvB-like_N"/>
</dbReference>
<dbReference type="InterPro" id="IPR008823">
    <property type="entry name" value="RuvB_C"/>
</dbReference>
<dbReference type="InterPro" id="IPR036388">
    <property type="entry name" value="WH-like_DNA-bd_sf"/>
</dbReference>
<dbReference type="InterPro" id="IPR036390">
    <property type="entry name" value="WH_DNA-bd_sf"/>
</dbReference>
<dbReference type="NCBIfam" id="NF000868">
    <property type="entry name" value="PRK00080.1"/>
    <property type="match status" value="1"/>
</dbReference>
<dbReference type="NCBIfam" id="TIGR00635">
    <property type="entry name" value="ruvB"/>
    <property type="match status" value="1"/>
</dbReference>
<dbReference type="PANTHER" id="PTHR42848">
    <property type="match status" value="1"/>
</dbReference>
<dbReference type="PANTHER" id="PTHR42848:SF1">
    <property type="entry name" value="HOLLIDAY JUNCTION BRANCH MIGRATION COMPLEX SUBUNIT RUVB"/>
    <property type="match status" value="1"/>
</dbReference>
<dbReference type="Pfam" id="PF17864">
    <property type="entry name" value="AAA_lid_4"/>
    <property type="match status" value="1"/>
</dbReference>
<dbReference type="Pfam" id="PF05491">
    <property type="entry name" value="RuvB_C"/>
    <property type="match status" value="1"/>
</dbReference>
<dbReference type="Pfam" id="PF05496">
    <property type="entry name" value="RuvB_N"/>
    <property type="match status" value="1"/>
</dbReference>
<dbReference type="SMART" id="SM00382">
    <property type="entry name" value="AAA"/>
    <property type="match status" value="1"/>
</dbReference>
<dbReference type="SUPFAM" id="SSF52540">
    <property type="entry name" value="P-loop containing nucleoside triphosphate hydrolases"/>
    <property type="match status" value="1"/>
</dbReference>
<dbReference type="SUPFAM" id="SSF46785">
    <property type="entry name" value="Winged helix' DNA-binding domain"/>
    <property type="match status" value="1"/>
</dbReference>